<proteinExistence type="evidence at protein level"/>
<dbReference type="EMBL" id="X68877">
    <property type="protein sequence ID" value="CAA48748.1"/>
    <property type="molecule type" value="mRNA"/>
</dbReference>
<dbReference type="EMBL" id="X68878">
    <property type="protein sequence ID" value="CAA48749.1"/>
    <property type="molecule type" value="mRNA"/>
</dbReference>
<dbReference type="PIR" id="S36326">
    <property type="entry name" value="S36326"/>
</dbReference>
<dbReference type="PIR" id="S36327">
    <property type="entry name" value="S36327"/>
</dbReference>
<dbReference type="RefSeq" id="NP_113916.1">
    <property type="nucleotide sequence ID" value="NM_031728.1"/>
</dbReference>
<dbReference type="BMRB" id="Q05140"/>
<dbReference type="SMR" id="Q05140"/>
<dbReference type="BioGRID" id="249290">
    <property type="interactions" value="10"/>
</dbReference>
<dbReference type="CORUM" id="Q05140"/>
<dbReference type="ELM" id="Q05140"/>
<dbReference type="FunCoup" id="Q05140">
    <property type="interactions" value="650"/>
</dbReference>
<dbReference type="IntAct" id="Q05140">
    <property type="interactions" value="6"/>
</dbReference>
<dbReference type="MINT" id="Q05140"/>
<dbReference type="STRING" id="10116.ENSRNOP00000030821"/>
<dbReference type="GlyCosmos" id="Q05140">
    <property type="glycosylation" value="1 site, No reported glycans"/>
</dbReference>
<dbReference type="GlyGen" id="Q05140">
    <property type="glycosylation" value="7 sites, 1 O-linked glycan (1 site)"/>
</dbReference>
<dbReference type="iPTMnet" id="Q05140"/>
<dbReference type="PhosphoSitePlus" id="Q05140"/>
<dbReference type="SwissPalm" id="Q05140"/>
<dbReference type="jPOST" id="Q05140"/>
<dbReference type="PaxDb" id="10116-ENSRNOP00000030821"/>
<dbReference type="GeneID" id="65178"/>
<dbReference type="KEGG" id="rno:65178"/>
<dbReference type="UCSC" id="RGD:69276">
    <molecule id="Q05140-1"/>
    <property type="organism name" value="rat"/>
</dbReference>
<dbReference type="AGR" id="RGD:69276"/>
<dbReference type="CTD" id="9892"/>
<dbReference type="RGD" id="69276">
    <property type="gene designation" value="Snap91"/>
</dbReference>
<dbReference type="eggNOG" id="KOG0251">
    <property type="taxonomic scope" value="Eukaryota"/>
</dbReference>
<dbReference type="InParanoid" id="Q05140"/>
<dbReference type="PhylomeDB" id="Q05140"/>
<dbReference type="Reactome" id="R-RNO-8856825">
    <property type="pathway name" value="Cargo recognition for clathrin-mediated endocytosis"/>
</dbReference>
<dbReference type="Reactome" id="R-RNO-8856828">
    <property type="pathway name" value="Clathrin-mediated endocytosis"/>
</dbReference>
<dbReference type="PRO" id="PR:Q05140"/>
<dbReference type="Proteomes" id="UP000002494">
    <property type="component" value="Unplaced"/>
</dbReference>
<dbReference type="GO" id="GO:0043679">
    <property type="term" value="C:axon terminus"/>
    <property type="evidence" value="ECO:0000314"/>
    <property type="project" value="RGD"/>
</dbReference>
<dbReference type="GO" id="GO:0005905">
    <property type="term" value="C:clathrin-coated pit"/>
    <property type="evidence" value="ECO:0000318"/>
    <property type="project" value="GO_Central"/>
</dbReference>
<dbReference type="GO" id="GO:0030136">
    <property type="term" value="C:clathrin-coated vesicle"/>
    <property type="evidence" value="ECO:0000314"/>
    <property type="project" value="RGD"/>
</dbReference>
<dbReference type="GO" id="GO:0005829">
    <property type="term" value="C:cytosol"/>
    <property type="evidence" value="ECO:0000314"/>
    <property type="project" value="CAFA"/>
</dbReference>
<dbReference type="GO" id="GO:0098894">
    <property type="term" value="C:extrinsic component of presynaptic endocytic zone membrane"/>
    <property type="evidence" value="ECO:0000314"/>
    <property type="project" value="SynGO"/>
</dbReference>
<dbReference type="GO" id="GO:0043025">
    <property type="term" value="C:neuronal cell body"/>
    <property type="evidence" value="ECO:0000314"/>
    <property type="project" value="RGD"/>
</dbReference>
<dbReference type="GO" id="GO:0098688">
    <property type="term" value="C:parallel fiber to Purkinje cell synapse"/>
    <property type="evidence" value="ECO:0000314"/>
    <property type="project" value="SynGO"/>
</dbReference>
<dbReference type="GO" id="GO:0005886">
    <property type="term" value="C:plasma membrane"/>
    <property type="evidence" value="ECO:0000314"/>
    <property type="project" value="BHF-UCL"/>
</dbReference>
<dbReference type="GO" id="GO:0014069">
    <property type="term" value="C:postsynaptic density"/>
    <property type="evidence" value="ECO:0000314"/>
    <property type="project" value="BHF-UCL"/>
</dbReference>
<dbReference type="GO" id="GO:0045211">
    <property type="term" value="C:postsynaptic membrane"/>
    <property type="evidence" value="ECO:0000314"/>
    <property type="project" value="BHF-UCL"/>
</dbReference>
<dbReference type="GO" id="GO:0048787">
    <property type="term" value="C:presynaptic active zone membrane"/>
    <property type="evidence" value="ECO:0000314"/>
    <property type="project" value="RGD"/>
</dbReference>
<dbReference type="GO" id="GO:0042734">
    <property type="term" value="C:presynaptic membrane"/>
    <property type="evidence" value="ECO:0000314"/>
    <property type="project" value="BHF-UCL"/>
</dbReference>
<dbReference type="GO" id="GO:0098685">
    <property type="term" value="C:Schaffer collateral - CA1 synapse"/>
    <property type="evidence" value="ECO:0000314"/>
    <property type="project" value="SynGO"/>
</dbReference>
<dbReference type="GO" id="GO:0008021">
    <property type="term" value="C:synaptic vesicle"/>
    <property type="evidence" value="ECO:0000314"/>
    <property type="project" value="BHF-UCL"/>
</dbReference>
<dbReference type="GO" id="GO:0043195">
    <property type="term" value="C:terminal bouton"/>
    <property type="evidence" value="ECO:0007005"/>
    <property type="project" value="ParkinsonsUK-UCL"/>
</dbReference>
<dbReference type="GO" id="GO:0005545">
    <property type="term" value="F:1-phosphatidylinositol binding"/>
    <property type="evidence" value="ECO:0000266"/>
    <property type="project" value="RGD"/>
</dbReference>
<dbReference type="GO" id="GO:0035615">
    <property type="term" value="F:clathrin adaptor activity"/>
    <property type="evidence" value="ECO:0000315"/>
    <property type="project" value="CAFA"/>
</dbReference>
<dbReference type="GO" id="GO:0030276">
    <property type="term" value="F:clathrin binding"/>
    <property type="evidence" value="ECO:0000353"/>
    <property type="project" value="DisProt"/>
</dbReference>
<dbReference type="GO" id="GO:0032050">
    <property type="term" value="F:clathrin heavy chain binding"/>
    <property type="evidence" value="ECO:0000353"/>
    <property type="project" value="CAFA"/>
</dbReference>
<dbReference type="GO" id="GO:0000822">
    <property type="term" value="F:inositol hexakisphosphate binding"/>
    <property type="evidence" value="ECO:0000314"/>
    <property type="project" value="RGD"/>
</dbReference>
<dbReference type="GO" id="GO:0060090">
    <property type="term" value="F:molecular adaptor activity"/>
    <property type="evidence" value="ECO:0000266"/>
    <property type="project" value="RGD"/>
</dbReference>
<dbReference type="GO" id="GO:0005546">
    <property type="term" value="F:phosphatidylinositol-4,5-bisphosphate binding"/>
    <property type="evidence" value="ECO:0000318"/>
    <property type="project" value="GO_Central"/>
</dbReference>
<dbReference type="GO" id="GO:0043274">
    <property type="term" value="F:phospholipase binding"/>
    <property type="evidence" value="ECO:0000353"/>
    <property type="project" value="RGD"/>
</dbReference>
<dbReference type="GO" id="GO:0160186">
    <property type="term" value="F:phospholipase C inhibitor activity"/>
    <property type="evidence" value="ECO:0000314"/>
    <property type="project" value="RGD"/>
</dbReference>
<dbReference type="GO" id="GO:0060961">
    <property type="term" value="F:phospholipase D inhibitor activity"/>
    <property type="evidence" value="ECO:0000314"/>
    <property type="project" value="RGD"/>
</dbReference>
<dbReference type="GO" id="GO:0019901">
    <property type="term" value="F:protein kinase binding"/>
    <property type="evidence" value="ECO:0000266"/>
    <property type="project" value="RGD"/>
</dbReference>
<dbReference type="GO" id="GO:0042169">
    <property type="term" value="F:SH2 domain binding"/>
    <property type="evidence" value="ECO:0000353"/>
    <property type="project" value="RGD"/>
</dbReference>
<dbReference type="GO" id="GO:0000149">
    <property type="term" value="F:SNARE binding"/>
    <property type="evidence" value="ECO:0000353"/>
    <property type="project" value="RGD"/>
</dbReference>
<dbReference type="GO" id="GO:0007409">
    <property type="term" value="P:axonogenesis"/>
    <property type="evidence" value="ECO:0000315"/>
    <property type="project" value="BHF-UCL"/>
</dbReference>
<dbReference type="GO" id="GO:0007268">
    <property type="term" value="P:chemical synaptic transmission"/>
    <property type="evidence" value="ECO:0000266"/>
    <property type="project" value="RGD"/>
</dbReference>
<dbReference type="GO" id="GO:0048268">
    <property type="term" value="P:clathrin coat assembly"/>
    <property type="evidence" value="ECO:0000314"/>
    <property type="project" value="DisProt"/>
</dbReference>
<dbReference type="GO" id="GO:0072583">
    <property type="term" value="P:clathrin-dependent endocytosis"/>
    <property type="evidence" value="ECO:0000318"/>
    <property type="project" value="GO_Central"/>
</dbReference>
<dbReference type="GO" id="GO:0007163">
    <property type="term" value="P:establishment or maintenance of cell polarity"/>
    <property type="evidence" value="ECO:0000315"/>
    <property type="project" value="BHF-UCL"/>
</dbReference>
<dbReference type="GO" id="GO:0048666">
    <property type="term" value="P:neuron development"/>
    <property type="evidence" value="ECO:0000315"/>
    <property type="project" value="RGD"/>
</dbReference>
<dbReference type="GO" id="GO:0007269">
    <property type="term" value="P:neurotransmitter secretion"/>
    <property type="evidence" value="ECO:0000266"/>
    <property type="project" value="RGD"/>
</dbReference>
<dbReference type="GO" id="GO:0050772">
    <property type="term" value="P:positive regulation of axonogenesis"/>
    <property type="evidence" value="ECO:0000315"/>
    <property type="project" value="RGD"/>
</dbReference>
<dbReference type="GO" id="GO:1905445">
    <property type="term" value="P:positive regulation of clathrin coat assembly"/>
    <property type="evidence" value="ECO:0000315"/>
    <property type="project" value="CAFA"/>
</dbReference>
<dbReference type="GO" id="GO:2000809">
    <property type="term" value="P:positive regulation of synaptic vesicle clustering"/>
    <property type="evidence" value="ECO:0000315"/>
    <property type="project" value="RGD"/>
</dbReference>
<dbReference type="GO" id="GO:1900244">
    <property type="term" value="P:positive regulation of synaptic vesicle endocytosis"/>
    <property type="evidence" value="ECO:0000315"/>
    <property type="project" value="RGD"/>
</dbReference>
<dbReference type="GO" id="GO:0015031">
    <property type="term" value="P:protein transport"/>
    <property type="evidence" value="ECO:0007669"/>
    <property type="project" value="UniProtKB-KW"/>
</dbReference>
<dbReference type="GO" id="GO:2000369">
    <property type="term" value="P:regulation of clathrin-dependent endocytosis"/>
    <property type="evidence" value="ECO:0000266"/>
    <property type="project" value="RGD"/>
</dbReference>
<dbReference type="GO" id="GO:0030100">
    <property type="term" value="P:regulation of endocytosis"/>
    <property type="evidence" value="ECO:0000315"/>
    <property type="project" value="BHF-UCL"/>
</dbReference>
<dbReference type="GO" id="GO:0051223">
    <property type="term" value="P:regulation of protein transport"/>
    <property type="evidence" value="ECO:0000315"/>
    <property type="project" value="BHF-UCL"/>
</dbReference>
<dbReference type="GO" id="GO:1900242">
    <property type="term" value="P:regulation of synaptic vesicle endocytosis"/>
    <property type="evidence" value="ECO:0000315"/>
    <property type="project" value="RGD"/>
</dbReference>
<dbReference type="GO" id="GO:2000331">
    <property type="term" value="P:regulation of terminal button organization"/>
    <property type="evidence" value="ECO:0000315"/>
    <property type="project" value="RGD"/>
</dbReference>
<dbReference type="GO" id="GO:0048488">
    <property type="term" value="P:synaptic vesicle endocytosis"/>
    <property type="evidence" value="ECO:0000314"/>
    <property type="project" value="SynGO"/>
</dbReference>
<dbReference type="GO" id="GO:0006900">
    <property type="term" value="P:vesicle budding from membrane"/>
    <property type="evidence" value="ECO:0000318"/>
    <property type="project" value="GO_Central"/>
</dbReference>
<dbReference type="CDD" id="cd16985">
    <property type="entry name" value="ANTH_N_AP180"/>
    <property type="match status" value="1"/>
</dbReference>
<dbReference type="DisProt" id="DP00225"/>
<dbReference type="FunFam" id="1.20.58.150:FF:000002">
    <property type="entry name" value="clathrin coat assembly protein AP180"/>
    <property type="match status" value="1"/>
</dbReference>
<dbReference type="FunFam" id="1.25.40.90:FF:000001">
    <property type="entry name" value="phosphatidylinositol-binding clathrin assembly protein-like isoform X1"/>
    <property type="match status" value="1"/>
</dbReference>
<dbReference type="Gene3D" id="1.25.40.90">
    <property type="match status" value="1"/>
</dbReference>
<dbReference type="Gene3D" id="1.20.58.150">
    <property type="entry name" value="ANTH domain"/>
    <property type="match status" value="1"/>
</dbReference>
<dbReference type="InterPro" id="IPR011417">
    <property type="entry name" value="ANTH_dom"/>
</dbReference>
<dbReference type="InterPro" id="IPR014712">
    <property type="entry name" value="ANTH_dom_sf"/>
</dbReference>
<dbReference type="InterPro" id="IPR045192">
    <property type="entry name" value="AP180-like"/>
</dbReference>
<dbReference type="InterPro" id="IPR013809">
    <property type="entry name" value="ENTH"/>
</dbReference>
<dbReference type="InterPro" id="IPR008942">
    <property type="entry name" value="ENTH_VHS"/>
</dbReference>
<dbReference type="PANTHER" id="PTHR22951">
    <property type="entry name" value="CLATHRIN ASSEMBLY PROTEIN"/>
    <property type="match status" value="1"/>
</dbReference>
<dbReference type="PANTHER" id="PTHR22951:SF4">
    <property type="entry name" value="CLATHRIN COAT ASSEMBLY PROTEIN AP180"/>
    <property type="match status" value="1"/>
</dbReference>
<dbReference type="Pfam" id="PF07651">
    <property type="entry name" value="ANTH"/>
    <property type="match status" value="1"/>
</dbReference>
<dbReference type="SMART" id="SM00273">
    <property type="entry name" value="ENTH"/>
    <property type="match status" value="1"/>
</dbReference>
<dbReference type="SUPFAM" id="SSF48464">
    <property type="entry name" value="ENTH/VHS domain"/>
    <property type="match status" value="1"/>
</dbReference>
<dbReference type="SUPFAM" id="SSF89009">
    <property type="entry name" value="GAT-like domain"/>
    <property type="match status" value="1"/>
</dbReference>
<dbReference type="PROSITE" id="PS50942">
    <property type="entry name" value="ENTH"/>
    <property type="match status" value="1"/>
</dbReference>
<comment type="function">
    <text>Adaptins are components of the adapter complexes which link clathrin to receptors in coated vesicles. Clathrin-associated protein complexes are believed to interact with the cytoplasmic tails of membrane proteins, leading to their selection and concentration. Binding of AP180 to clathrin triskelia induces their assembly into 60-70 nm coats.</text>
</comment>
<comment type="subunit">
    <text evidence="4 5 6 7 8">Binds AP2A2. Interacts with AP2B1; clathrin competes with SNAP91.</text>
</comment>
<comment type="subcellular location">
    <subcellularLocation>
        <location>Cell membrane</location>
    </subcellularLocation>
    <subcellularLocation>
        <location>Membrane</location>
        <location>Coated pit</location>
        <topology>Peripheral membrane protein</topology>
        <orientation>Cytoplasmic side</orientation>
    </subcellularLocation>
    <text>Component of the coat surrounding the cytoplasmic face of coated vesicles in the plasma membrane.</text>
</comment>
<comment type="alternative products">
    <event type="alternative splicing"/>
    <isoform>
        <id>Q05140-1</id>
        <name>1</name>
        <sequence type="displayed"/>
    </isoform>
    <isoform>
        <id>Q05140-2</id>
        <name>2</name>
        <sequence type="described" ref="VSP_000173"/>
    </isoform>
</comment>
<comment type="domain">
    <text>Possesses a three domain structure: the N-terminal 300 residues harbor a clathrin binding site, an acidic middle domain 450 residues, interrupted by an Ala-rich segment, and the C-terminal domain (166 residues).</text>
</comment>
<comment type="PTM">
    <text evidence="9">Thr-310 can be modified by the addition of N-acetylglucosamine which can be further phosphorylated. The form with phosphorylated O-linked N-acetylglucosamine is predominant in brain synaptosomes. There is no evidence for direct Thr-310 phosphorylation (PubMed:21500857).</text>
</comment>
<comment type="similarity">
    <text evidence="11">Belongs to the PICALM/SNAP91 family.</text>
</comment>
<organism>
    <name type="scientific">Rattus norvegicus</name>
    <name type="common">Rat</name>
    <dbReference type="NCBI Taxonomy" id="10116"/>
    <lineage>
        <taxon>Eukaryota</taxon>
        <taxon>Metazoa</taxon>
        <taxon>Chordata</taxon>
        <taxon>Craniata</taxon>
        <taxon>Vertebrata</taxon>
        <taxon>Euteleostomi</taxon>
        <taxon>Mammalia</taxon>
        <taxon>Eutheria</taxon>
        <taxon>Euarchontoglires</taxon>
        <taxon>Glires</taxon>
        <taxon>Rodentia</taxon>
        <taxon>Myomorpha</taxon>
        <taxon>Muroidea</taxon>
        <taxon>Muridae</taxon>
        <taxon>Murinae</taxon>
        <taxon>Rattus</taxon>
    </lineage>
</organism>
<keyword id="KW-0025">Alternative splicing</keyword>
<keyword id="KW-1003">Cell membrane</keyword>
<keyword id="KW-0168">Coated pit</keyword>
<keyword id="KW-0903">Direct protein sequencing</keyword>
<keyword id="KW-0325">Glycoprotein</keyword>
<keyword id="KW-0472">Membrane</keyword>
<keyword id="KW-0488">Methylation</keyword>
<keyword id="KW-0597">Phosphoprotein</keyword>
<keyword id="KW-0653">Protein transport</keyword>
<keyword id="KW-1185">Reference proteome</keyword>
<keyword id="KW-0813">Transport</keyword>
<evidence type="ECO:0000250" key="1">
    <source>
        <dbReference type="UniProtKB" id="Q61548"/>
    </source>
</evidence>
<evidence type="ECO:0000255" key="2">
    <source>
        <dbReference type="PROSITE-ProRule" id="PRU00243"/>
    </source>
</evidence>
<evidence type="ECO:0000256" key="3">
    <source>
        <dbReference type="SAM" id="MobiDB-lite"/>
    </source>
</evidence>
<evidence type="ECO:0000269" key="4">
    <source>
    </source>
</evidence>
<evidence type="ECO:0000269" key="5">
    <source>
    </source>
</evidence>
<evidence type="ECO:0000269" key="6">
    <source>
    </source>
</evidence>
<evidence type="ECO:0000269" key="7">
    <source>
    </source>
</evidence>
<evidence type="ECO:0000269" key="8">
    <source>
    </source>
</evidence>
<evidence type="ECO:0000269" key="9">
    <source>
    </source>
</evidence>
<evidence type="ECO:0000303" key="10">
    <source>
    </source>
</evidence>
<evidence type="ECO:0000305" key="11"/>
<evidence type="ECO:0007744" key="12">
    <source>
    </source>
</evidence>
<accession>Q05140</accession>
<gene>
    <name type="primary">Snap91</name>
</gene>
<feature type="chain" id="PRO_0000193866" description="Clathrin coat assembly protein AP180">
    <location>
        <begin position="1"/>
        <end position="915"/>
    </location>
</feature>
<feature type="domain" description="ENTH" evidence="2">
    <location>
        <begin position="14"/>
        <end position="145"/>
    </location>
</feature>
<feature type="region of interest" description="Disordered" evidence="3">
    <location>
        <begin position="285"/>
        <end position="326"/>
    </location>
</feature>
<feature type="region of interest" description="Disordered" evidence="3">
    <location>
        <begin position="391"/>
        <end position="425"/>
    </location>
</feature>
<feature type="region of interest" description="Disordered" evidence="3">
    <location>
        <begin position="497"/>
        <end position="522"/>
    </location>
</feature>
<feature type="region of interest" description="Disordered" evidence="3">
    <location>
        <begin position="720"/>
        <end position="765"/>
    </location>
</feature>
<feature type="region of interest" description="Disordered" evidence="3">
    <location>
        <begin position="817"/>
        <end position="855"/>
    </location>
</feature>
<feature type="region of interest" description="Disordered" evidence="3">
    <location>
        <begin position="875"/>
        <end position="915"/>
    </location>
</feature>
<feature type="compositionally biased region" description="Polar residues" evidence="3">
    <location>
        <begin position="302"/>
        <end position="324"/>
    </location>
</feature>
<feature type="compositionally biased region" description="Low complexity" evidence="3">
    <location>
        <begin position="410"/>
        <end position="425"/>
    </location>
</feature>
<feature type="compositionally biased region" description="Low complexity" evidence="3">
    <location>
        <begin position="500"/>
        <end position="511"/>
    </location>
</feature>
<feature type="compositionally biased region" description="Pro residues" evidence="3">
    <location>
        <begin position="512"/>
        <end position="522"/>
    </location>
</feature>
<feature type="compositionally biased region" description="Low complexity" evidence="3">
    <location>
        <begin position="720"/>
        <end position="735"/>
    </location>
</feature>
<feature type="compositionally biased region" description="Polar residues" evidence="3">
    <location>
        <begin position="884"/>
        <end position="896"/>
    </location>
</feature>
<feature type="compositionally biased region" description="Basic and acidic residues" evidence="3">
    <location>
        <begin position="901"/>
        <end position="915"/>
    </location>
</feature>
<feature type="modified residue" description="Phosphoserine" evidence="12">
    <location>
        <position position="296"/>
    </location>
</feature>
<feature type="modified residue" description="Phosphoserine" evidence="12">
    <location>
        <position position="300"/>
    </location>
</feature>
<feature type="modified residue" description="Phosphoserine" evidence="9">
    <location>
        <position position="306"/>
    </location>
</feature>
<feature type="modified residue" description="Phosphoserine" evidence="9 12">
    <location>
        <position position="313"/>
    </location>
</feature>
<feature type="modified residue" description="Phosphothreonine" evidence="1">
    <location>
        <position position="317"/>
    </location>
</feature>
<feature type="modified residue" description="Phosphoserine" evidence="12">
    <location>
        <position position="594"/>
    </location>
</feature>
<feature type="modified residue" description="Phosphoserine" evidence="9">
    <location>
        <position position="600"/>
    </location>
</feature>
<feature type="modified residue" description="Phosphoserine" evidence="9">
    <location>
        <position position="640"/>
    </location>
</feature>
<feature type="modified residue" description="Phosphoserine" evidence="9">
    <location>
        <position position="646"/>
    </location>
</feature>
<feature type="modified residue" description="Phosphoserine" evidence="12">
    <location>
        <position position="775"/>
    </location>
</feature>
<feature type="modified residue" description="Asymmetric dimethylarginine; alternate" evidence="1">
    <location>
        <position position="873"/>
    </location>
</feature>
<feature type="modified residue" description="Omega-N-methylarginine; alternate" evidence="1">
    <location>
        <position position="873"/>
    </location>
</feature>
<feature type="glycosylation site" description="O-linked (GlcNAc) threonine" evidence="9">
    <location>
        <position position="310"/>
    </location>
</feature>
<feature type="splice variant" id="VSP_000173" description="In isoform 2." evidence="10">
    <location>
        <begin position="614"/>
        <end position="632"/>
    </location>
</feature>
<feature type="modified residue" description="Phosphoserine" evidence="12">
    <location sequence="Q05140-2">
        <position position="600"/>
    </location>
</feature>
<feature type="modified residue" description="Phosphoserine" evidence="12">
    <location sequence="Q05140-2">
        <position position="627"/>
    </location>
</feature>
<name>AP180_RAT</name>
<sequence>MSGQTLTDRIAAAQYSVTGSAVARAVCKATTHEVMGPKKKHLDYLIQATNETNVNIPQMADTLFERATNSSWVVVFKALVTTHHLMVHGNERFIQYLASRNTLFNLSNFLDKSGSHGYDMSTFIRRYSRYLNEKAFSYRQMAFDFARVKKGADGVMRTMVPEKLLKSMPILQGQIDALLEFDVHPNELTNGVINAAFMLLFKDLIKLFACYNDGVINLLEKFFEMKKGQCKDALEIYKRFLTRMTRVSEFLKVADEVGIDKGDIPDLTQAPSSLMETLEQHLNTLEGKKPGNNEGSGAPSPLSKSSPATTVTSPNSTPAKTIDTSPPVDIFATASAAAPVSSAKPSSDLLDLQPDFSGARAGAAAPVPPPTGGATAWGDLLGEDSLAALSSVPSEAPISDPFAPEPSPPTTTTEPASASASATTAVTAATTEVDLFGDAFAASPGEAPAASEGATAPATPAPVAAALDACSGNDPFAPSEGSAEAAPELDLFAMKPPETSAPVVTPTASTAPPVPATAPSPAPTAVAATAATTTAAAAATTTATTSAAAATTAAAPPALDIFGDLFDSAPEVAAASKPDVAPSIDLFGTDAFSSPPRGASPVPESSLTADLLSGSGFHCAEDDRHVPLFFTAVDAFAAPSPASTASPAKAESSGVIDLFGDAFGSSASETQPAPQAVSSSSASADLLAGFGGSFMAPSTTPVTPAQNNLLQPNFEAAFGTTPSTSSSSSFDPSGDLLMPTMAPSGQPAPVSMVPPSPAMSASKGLGSDLDSSLASLVGNLGISGTTSKKGDLQWNAGEKKLTGGANWQPKVTPATWSAGVPPQGTVPPTSSVPPGAGAPSVGQPGAGYGMPPAGTGMTMMPQQPVMFAQPMMRPPFGAAAVPGTQLSPSPTPATQSPKKPPAKDPLADLNIKDFL</sequence>
<protein>
    <recommendedName>
        <fullName>Clathrin coat assembly protein AP180</fullName>
    </recommendedName>
    <alternativeName>
        <fullName>91 kDa synaptosomal-associated protein</fullName>
    </alternativeName>
    <alternativeName>
        <fullName>Clathrin coat-associated protein AP180</fullName>
    </alternativeName>
</protein>
<reference key="1">
    <citation type="journal article" date="1993" name="EMBO J.">
        <title>Clathrin assembly protein AP180: primary structure, domain organization and identification of a clathrin binding site.</title>
        <authorList>
            <person name="Morris S.A."/>
            <person name="Schroeder S."/>
            <person name="Plessmann U."/>
            <person name="Weber K."/>
            <person name="Ungewickell E."/>
        </authorList>
    </citation>
    <scope>NUCLEOTIDE SEQUENCE [MRNA] (ISOFORMS 1 AND 2)</scope>
    <source>
        <tissue>Brain</tissue>
    </source>
</reference>
<reference key="2">
    <citation type="submission" date="2007-09" db="UniProtKB">
        <authorList>
            <person name="Lubec G."/>
            <person name="Kang S.U."/>
            <person name="Lubec S."/>
        </authorList>
    </citation>
    <scope>PROTEIN SEQUENCE OF 25-39 AND 247-252 (ISOFORMS 1/2)</scope>
    <scope>IDENTIFICATION BY MASS SPECTROMETRY</scope>
    <source>
        <strain>Sprague-Dawley</strain>
        <tissue>Brain</tissue>
    </source>
</reference>
<reference key="3">
    <citation type="journal article" date="2011" name="J. Proteome Res.">
        <title>A novel post-translational modification in nerve terminals: O-linked N-acetylglucosamine phosphorylation.</title>
        <authorList>
            <person name="Graham M.E."/>
            <person name="Thaysen-Andersen M."/>
            <person name="Bache N."/>
            <person name="Craft G.E."/>
            <person name="Larsen M.R."/>
            <person name="Packer N.H."/>
            <person name="Robinson P.J."/>
        </authorList>
    </citation>
    <scope>PROTEIN SEQUENCE OF 305-320 (ISOFORMS 1/2)</scope>
    <scope>PROTEIN SEQUENCE OF 598-649 (ISOFORM 2)</scope>
    <scope>GLYCOSYLATION AT THR-310</scope>
    <scope>PHOSPHORYLATION AT SER-306; SER-313; SER-600; SER-640 AND SER-646</scope>
    <scope>IDENTIFICATION BY MASS SPECTROMETRY</scope>
</reference>
<reference key="4">
    <citation type="journal article" date="1999" name="Cell">
        <title>A structural explanation for the binding of multiple ligands by the alpha-adaptin appendage domain.</title>
        <authorList>
            <person name="Owen D.J."/>
            <person name="Vallis Y."/>
            <person name="Noble M.E.M."/>
            <person name="Hunter J.B."/>
            <person name="Dafforn T.R."/>
            <person name="Evans P.R."/>
            <person name="McMahon H.T."/>
        </authorList>
    </citation>
    <scope>INTERACTION WITH AP2A2</scope>
</reference>
<reference key="5">
    <citation type="journal article" date="1999" name="Proc. Natl. Acad. Sci. U.S.A.">
        <title>Crystal structure of the alpha appendage of AP-2 reveals a recruitment platform for clathrin-coat assembly.</title>
        <authorList>
            <person name="Traub L.M."/>
            <person name="Downs M.A."/>
            <person name="Westrich J.L."/>
            <person name="Fremont D.H."/>
        </authorList>
    </citation>
    <scope>INTERACTION WITH AP2A2</scope>
</reference>
<reference key="6">
    <citation type="journal article" date="2000" name="EMBO J.">
        <title>The structure and function of the beta 2-adaptin appendage domain.</title>
        <authorList>
            <person name="Owen D.J."/>
            <person name="Vallis Y."/>
            <person name="Pearse B.M.F."/>
            <person name="McMahon H.T."/>
            <person name="Evans P.R."/>
        </authorList>
    </citation>
    <scope>INTERACTION WITH AP2B1</scope>
</reference>
<reference key="7">
    <citation type="journal article" date="2006" name="Dev. Cell">
        <title>Molecular switches involving the AP-2 beta2 appendage regulate endocytic cargo selection and clathrin coat assembly.</title>
        <authorList>
            <person name="Edeling M.A."/>
            <person name="Mishra S.K."/>
            <person name="Keyel P.A."/>
            <person name="Steinhauser A.L."/>
            <person name="Collins B.M."/>
            <person name="Roth R."/>
            <person name="Heuser J.E."/>
            <person name="Owen D.J."/>
            <person name="Traub L.M."/>
        </authorList>
    </citation>
    <scope>INTERACTION WITH AP2B1</scope>
</reference>
<reference key="8">
    <citation type="journal article" date="2006" name="PLoS Biol.">
        <title>Role of the AP2 beta-appendage hub in recruiting partners for clathrin-coated vesicle assembly.</title>
        <authorList>
            <person name="Schmid E.M."/>
            <person name="Ford M.G.J."/>
            <person name="Burtey A."/>
            <person name="Praefcke G.J.K."/>
            <person name="Peak-Chew S.-Y."/>
            <person name="Mills I.G."/>
            <person name="Benmerah A."/>
            <person name="McMahon H.T."/>
        </authorList>
    </citation>
    <scope>INTERACTION WITH AP2B1</scope>
</reference>
<reference key="9">
    <citation type="journal article" date="2012" name="Nat. Commun.">
        <title>Quantitative maps of protein phosphorylation sites across 14 different rat organs and tissues.</title>
        <authorList>
            <person name="Lundby A."/>
            <person name="Secher A."/>
            <person name="Lage K."/>
            <person name="Nordsborg N.B."/>
            <person name="Dmytriyev A."/>
            <person name="Lundby C."/>
            <person name="Olsen J.V."/>
        </authorList>
    </citation>
    <scope>PHOSPHORYLATION [LARGE SCALE ANALYSIS] AT SER-296; SER-300; SER-313; SER-594 AND SER-775</scope>
    <scope>PHOSPHORYLATION [LARGE SCALE ANALYSIS] AT SER-600 AND SER-627 (ISOFORM 2)</scope>
    <scope>IDENTIFICATION BY MASS SPECTROMETRY [LARGE SCALE ANALYSIS]</scope>
</reference>